<name>TRM5_MACFA</name>
<gene>
    <name evidence="2" type="primary">TRMT5</name>
    <name evidence="2" type="synonym">TRM5</name>
    <name type="ORF">QtrA-10686</name>
</gene>
<protein>
    <recommendedName>
        <fullName evidence="2">tRNA (guanine(37)-N(1))-methyltransferase</fullName>
        <ecNumber evidence="2">2.1.1.228</ecNumber>
    </recommendedName>
    <alternativeName>
        <fullName evidence="2">M1G-methyltransferase</fullName>
    </alternativeName>
    <alternativeName>
        <fullName evidence="2">tRNA [GM37] methyltransferase</fullName>
    </alternativeName>
    <alternativeName>
        <fullName evidence="2">tRNA methyltransferase 5 homolog</fullName>
    </alternativeName>
</protein>
<sequence>MVLWILWRPFGFSRRLLKLERHSITESKSLIPLAWTSLTQTLSESPGIFLLGQRKRFSTMPEIETHEGDSELFSPPSDVRGMTKLDRTAFKKTVNIPVLKVRKEIVSRLMRSLRRAALQRPGIKRVIEDPEDKESRLILLDPYKIFTHDSFEKAGLSVLEQLNVSPQISKYNLELTYENFKSEEILRAVLPEGQDVTSGFSRVGHIAHLNLRDHQLPFKQLIGQVMIDKNPGITSAVNKINNIDNMYRNFHMEVLSGEQNMMTKVRENKYTYEFDFSKVYWNPRLSTEHSRITELLKAGDVLFDVFAGVGPFAIPVAKKNCTVFANDLNPESHKWLLHNCKLNKVDQKVKIFNLDGKDFLQGPVKEELIQLLSLSKERKPSVHIVMNLPAKAIEFLSAFKWLLDGQPCSNEFLPIVHCYSFSKDANPAKDVRQRAGAVLGISLEACSSVHLVRNVAPNKEMLCITFQIPAAVLYKNQTKNPENHEDPPLKRQRTAEAFSDEKTQIASNT</sequence>
<reference key="1">
    <citation type="submission" date="2001-04" db="EMBL/GenBank/DDBJ databases">
        <title>Isolation of full-length cDNA clones from macaque brain cDNA libraries.</title>
        <authorList>
            <person name="Osada N."/>
            <person name="Hida M."/>
            <person name="Kusuda J."/>
            <person name="Tanuma R."/>
            <person name="Iseki K."/>
            <person name="Hirai M."/>
            <person name="Terao K."/>
            <person name="Suzuki Y."/>
            <person name="Sugano S."/>
            <person name="Hashimoto K."/>
        </authorList>
    </citation>
    <scope>NUCLEOTIDE SEQUENCE [LARGE SCALE MRNA]</scope>
    <source>
        <tissue>Temporal cortex</tissue>
    </source>
</reference>
<evidence type="ECO:0000250" key="1">
    <source>
        <dbReference type="UniProtKB" id="Q32P41"/>
    </source>
</evidence>
<evidence type="ECO:0000255" key="2">
    <source>
        <dbReference type="HAMAP-Rule" id="MF_03152"/>
    </source>
</evidence>
<evidence type="ECO:0000256" key="3">
    <source>
        <dbReference type="SAM" id="MobiDB-lite"/>
    </source>
</evidence>
<evidence type="ECO:0000305" key="4"/>
<proteinExistence type="evidence at transcript level"/>
<comment type="function">
    <text evidence="1 2">Involved in mitochondrial tRNA methylation (By similarity). Specifically methylates the N1 position of guanosine-37 in various tRNAs. Methylation is not dependent on the nature of the nucleoside 5' of the target nucleoside. This is the first step in the biosynthesis of wybutosine (yW), a modified base adjacent to the anticodon of tRNAs and required for accurate decoding.</text>
</comment>
<comment type="catalytic activity">
    <reaction evidence="2">
        <text>guanosine(37) in tRNA + S-adenosyl-L-methionine = N(1)-methylguanosine(37) in tRNA + S-adenosyl-L-homocysteine + H(+)</text>
        <dbReference type="Rhea" id="RHEA:36899"/>
        <dbReference type="Rhea" id="RHEA-COMP:10145"/>
        <dbReference type="Rhea" id="RHEA-COMP:10147"/>
        <dbReference type="ChEBI" id="CHEBI:15378"/>
        <dbReference type="ChEBI" id="CHEBI:57856"/>
        <dbReference type="ChEBI" id="CHEBI:59789"/>
        <dbReference type="ChEBI" id="CHEBI:73542"/>
        <dbReference type="ChEBI" id="CHEBI:74269"/>
        <dbReference type="EC" id="2.1.1.228"/>
    </reaction>
</comment>
<comment type="subunit">
    <text evidence="2">Monomer.</text>
</comment>
<comment type="subcellular location">
    <subcellularLocation>
        <location evidence="2">Mitochondrion matrix</location>
    </subcellularLocation>
    <subcellularLocation>
        <location evidence="2">Nucleus</location>
    </subcellularLocation>
    <subcellularLocation>
        <location evidence="2">Cytoplasm</location>
    </subcellularLocation>
    <text evidence="2">Predominantly in the mitochondria and in the nucleus.</text>
</comment>
<comment type="similarity">
    <text evidence="4">Belongs to the class I-like SAM-binding methyltransferase superfamily. TRM5/TYW2 family.</text>
</comment>
<accession>Q95KJ2</accession>
<organism>
    <name type="scientific">Macaca fascicularis</name>
    <name type="common">Crab-eating macaque</name>
    <name type="synonym">Cynomolgus monkey</name>
    <dbReference type="NCBI Taxonomy" id="9541"/>
    <lineage>
        <taxon>Eukaryota</taxon>
        <taxon>Metazoa</taxon>
        <taxon>Chordata</taxon>
        <taxon>Craniata</taxon>
        <taxon>Vertebrata</taxon>
        <taxon>Euteleostomi</taxon>
        <taxon>Mammalia</taxon>
        <taxon>Eutheria</taxon>
        <taxon>Euarchontoglires</taxon>
        <taxon>Primates</taxon>
        <taxon>Haplorrhini</taxon>
        <taxon>Catarrhini</taxon>
        <taxon>Cercopithecidae</taxon>
        <taxon>Cercopithecinae</taxon>
        <taxon>Macaca</taxon>
    </lineage>
</organism>
<feature type="transit peptide" description="Mitochondrion" evidence="2">
    <location>
        <begin position="1"/>
        <end position="57"/>
    </location>
</feature>
<feature type="chain" id="PRO_0000256514" description="tRNA (guanine(37)-N(1))-methyltransferase">
    <location>
        <begin position="58"/>
        <end position="509"/>
    </location>
</feature>
<feature type="region of interest" description="Disordered" evidence="3">
    <location>
        <begin position="478"/>
        <end position="509"/>
    </location>
</feature>
<feature type="binding site" evidence="2">
    <location>
        <position position="289"/>
    </location>
    <ligand>
        <name>S-adenosyl-L-methionine</name>
        <dbReference type="ChEBI" id="CHEBI:59789"/>
    </ligand>
</feature>
<feature type="binding site" evidence="2">
    <location>
        <begin position="327"/>
        <end position="328"/>
    </location>
    <ligand>
        <name>S-adenosyl-L-methionine</name>
        <dbReference type="ChEBI" id="CHEBI:59789"/>
    </ligand>
</feature>
<feature type="binding site" evidence="2">
    <location>
        <begin position="355"/>
        <end position="356"/>
    </location>
    <ligand>
        <name>S-adenosyl-L-methionine</name>
        <dbReference type="ChEBI" id="CHEBI:59789"/>
    </ligand>
</feature>
<feature type="binding site" evidence="2">
    <location>
        <position position="387"/>
    </location>
    <ligand>
        <name>S-adenosyl-L-methionine</name>
        <dbReference type="ChEBI" id="CHEBI:59789"/>
    </ligand>
</feature>
<keyword id="KW-0963">Cytoplasm</keyword>
<keyword id="KW-0489">Methyltransferase</keyword>
<keyword id="KW-0496">Mitochondrion</keyword>
<keyword id="KW-0539">Nucleus</keyword>
<keyword id="KW-1185">Reference proteome</keyword>
<keyword id="KW-0949">S-adenosyl-L-methionine</keyword>
<keyword id="KW-0808">Transferase</keyword>
<keyword id="KW-0809">Transit peptide</keyword>
<keyword id="KW-0819">tRNA processing</keyword>
<dbReference type="EC" id="2.1.1.228" evidence="2"/>
<dbReference type="EMBL" id="AB060834">
    <property type="protein sequence ID" value="BAB46864.1"/>
    <property type="molecule type" value="mRNA"/>
</dbReference>
<dbReference type="RefSeq" id="NP_001306556.1">
    <property type="nucleotide sequence ID" value="NM_001319627.1"/>
</dbReference>
<dbReference type="SMR" id="Q95KJ2"/>
<dbReference type="STRING" id="9541.ENSMFAP00000032753"/>
<dbReference type="eggNOG" id="KOG2078">
    <property type="taxonomic scope" value="Eukaryota"/>
</dbReference>
<dbReference type="Proteomes" id="UP000233100">
    <property type="component" value="Unplaced"/>
</dbReference>
<dbReference type="GO" id="GO:0005759">
    <property type="term" value="C:mitochondrial matrix"/>
    <property type="evidence" value="ECO:0000250"/>
    <property type="project" value="UniProtKB"/>
</dbReference>
<dbReference type="GO" id="GO:0005634">
    <property type="term" value="C:nucleus"/>
    <property type="evidence" value="ECO:0007669"/>
    <property type="project" value="UniProtKB-SubCell"/>
</dbReference>
<dbReference type="GO" id="GO:0052906">
    <property type="term" value="F:tRNA (guanine(37)-N1)-methyltransferase activity"/>
    <property type="evidence" value="ECO:0007669"/>
    <property type="project" value="UniProtKB-UniRule"/>
</dbReference>
<dbReference type="GO" id="GO:0070901">
    <property type="term" value="P:mitochondrial tRNA methylation"/>
    <property type="evidence" value="ECO:0000250"/>
    <property type="project" value="UniProtKB"/>
</dbReference>
<dbReference type="GO" id="GO:0002939">
    <property type="term" value="P:tRNA N1-guanine methylation"/>
    <property type="evidence" value="ECO:0007669"/>
    <property type="project" value="TreeGrafter"/>
</dbReference>
<dbReference type="FunFam" id="3.30.300.110:FF:000001">
    <property type="entry name" value="tRNA (guanine(37)-N1)-methyltransferase"/>
    <property type="match status" value="1"/>
</dbReference>
<dbReference type="FunFam" id="3.40.50.150:FF:000102">
    <property type="entry name" value="tRNA (guanine(37)-N1)-methyltransferase"/>
    <property type="match status" value="1"/>
</dbReference>
<dbReference type="Gene3D" id="3.30.300.110">
    <property type="entry name" value="Met-10+ protein-like domains"/>
    <property type="match status" value="1"/>
</dbReference>
<dbReference type="Gene3D" id="3.40.50.150">
    <property type="entry name" value="Vaccinia Virus protein VP39"/>
    <property type="match status" value="1"/>
</dbReference>
<dbReference type="HAMAP" id="MF_03152">
    <property type="entry name" value="TRM5"/>
    <property type="match status" value="1"/>
</dbReference>
<dbReference type="InterPro" id="IPR030382">
    <property type="entry name" value="MeTrfase_TRM5/TYW2"/>
</dbReference>
<dbReference type="InterPro" id="IPR029063">
    <property type="entry name" value="SAM-dependent_MTases_sf"/>
</dbReference>
<dbReference type="InterPro" id="IPR056743">
    <property type="entry name" value="TRM5-TYW2-like_MTfase"/>
</dbReference>
<dbReference type="InterPro" id="IPR056744">
    <property type="entry name" value="TRM5/TYW2-like_N"/>
</dbReference>
<dbReference type="InterPro" id="IPR025792">
    <property type="entry name" value="tRNA_Gua_MeTrfase_euk"/>
</dbReference>
<dbReference type="PANTHER" id="PTHR23245:SF36">
    <property type="entry name" value="TRNA (GUANINE(37)-N1)-METHYLTRANSFERASE"/>
    <property type="match status" value="1"/>
</dbReference>
<dbReference type="PANTHER" id="PTHR23245">
    <property type="entry name" value="TRNA METHYLTRANSFERASE"/>
    <property type="match status" value="1"/>
</dbReference>
<dbReference type="Pfam" id="PF02475">
    <property type="entry name" value="TRM5-TYW2_MTfase"/>
    <property type="match status" value="1"/>
</dbReference>
<dbReference type="Pfam" id="PF25133">
    <property type="entry name" value="TYW2_N_2"/>
    <property type="match status" value="1"/>
</dbReference>
<dbReference type="SUPFAM" id="SSF53335">
    <property type="entry name" value="S-adenosyl-L-methionine-dependent methyltransferases"/>
    <property type="match status" value="1"/>
</dbReference>
<dbReference type="PROSITE" id="PS51684">
    <property type="entry name" value="SAM_MT_TRM5_TYW2"/>
    <property type="match status" value="1"/>
</dbReference>